<keyword id="KW-0010">Activator</keyword>
<keyword id="KW-0963">Cytoplasm</keyword>
<keyword id="KW-0238">DNA-binding</keyword>
<keyword id="KW-0677">Repeat</keyword>
<keyword id="KW-0684">Rhamnose metabolism</keyword>
<keyword id="KW-0804">Transcription</keyword>
<keyword id="KW-0805">Transcription regulation</keyword>
<feature type="chain" id="PRO_1000200950" description="HTH-type transcriptional activator RhaS">
    <location>
        <begin position="1"/>
        <end position="278"/>
    </location>
</feature>
<feature type="domain" description="HTH araC/xylS-type" evidence="1">
    <location>
        <begin position="174"/>
        <end position="272"/>
    </location>
</feature>
<feature type="DNA-binding region" description="H-T-H motif" evidence="1">
    <location>
        <begin position="191"/>
        <end position="212"/>
    </location>
</feature>
<feature type="DNA-binding region" description="H-T-H motif" evidence="1">
    <location>
        <begin position="239"/>
        <end position="262"/>
    </location>
</feature>
<feature type="site" description="Interaction with sigma-70" evidence="1">
    <location>
        <position position="241"/>
    </location>
</feature>
<feature type="site" description="Interaction with sigma-70" evidence="1">
    <location>
        <position position="250"/>
    </location>
</feature>
<accession>B1LMU6</accession>
<organism>
    <name type="scientific">Escherichia coli (strain SMS-3-5 / SECEC)</name>
    <dbReference type="NCBI Taxonomy" id="439855"/>
    <lineage>
        <taxon>Bacteria</taxon>
        <taxon>Pseudomonadati</taxon>
        <taxon>Pseudomonadota</taxon>
        <taxon>Gammaproteobacteria</taxon>
        <taxon>Enterobacterales</taxon>
        <taxon>Enterobacteriaceae</taxon>
        <taxon>Escherichia</taxon>
    </lineage>
</organism>
<proteinExistence type="inferred from homology"/>
<comment type="function">
    <text evidence="1">Activates expression of the rhaBAD and rhaT operons.</text>
</comment>
<comment type="subunit">
    <text evidence="1">Binds DNA as a dimer.</text>
</comment>
<comment type="subcellular location">
    <subcellularLocation>
        <location evidence="1">Cytoplasm</location>
    </subcellularLocation>
</comment>
<dbReference type="EMBL" id="CP000970">
    <property type="protein sequence ID" value="ACB20059.1"/>
    <property type="molecule type" value="Genomic_DNA"/>
</dbReference>
<dbReference type="RefSeq" id="WP_000217150.1">
    <property type="nucleotide sequence ID" value="NC_010498.1"/>
</dbReference>
<dbReference type="SMR" id="B1LMU6"/>
<dbReference type="KEGG" id="ecm:EcSMS35_4297"/>
<dbReference type="HOGENOM" id="CLU_000445_88_5_6"/>
<dbReference type="Proteomes" id="UP000007011">
    <property type="component" value="Chromosome"/>
</dbReference>
<dbReference type="GO" id="GO:0005737">
    <property type="term" value="C:cytoplasm"/>
    <property type="evidence" value="ECO:0007669"/>
    <property type="project" value="UniProtKB-SubCell"/>
</dbReference>
<dbReference type="GO" id="GO:0003700">
    <property type="term" value="F:DNA-binding transcription factor activity"/>
    <property type="evidence" value="ECO:0007669"/>
    <property type="project" value="UniProtKB-UniRule"/>
</dbReference>
<dbReference type="GO" id="GO:0043565">
    <property type="term" value="F:sequence-specific DNA binding"/>
    <property type="evidence" value="ECO:0007669"/>
    <property type="project" value="InterPro"/>
</dbReference>
<dbReference type="GO" id="GO:0045893">
    <property type="term" value="P:positive regulation of DNA-templated transcription"/>
    <property type="evidence" value="ECO:0007669"/>
    <property type="project" value="UniProtKB-UniRule"/>
</dbReference>
<dbReference type="GO" id="GO:0019299">
    <property type="term" value="P:rhamnose metabolic process"/>
    <property type="evidence" value="ECO:0007669"/>
    <property type="project" value="UniProtKB-UniRule"/>
</dbReference>
<dbReference type="CDD" id="cd06977">
    <property type="entry name" value="cupin_RhaR_RhaS-like_N"/>
    <property type="match status" value="1"/>
</dbReference>
<dbReference type="FunFam" id="1.10.10.60:FF:000181">
    <property type="entry name" value="HTH-type transcriptional activator RhaS"/>
    <property type="match status" value="1"/>
</dbReference>
<dbReference type="FunFam" id="2.60.120.10:FF:000041">
    <property type="entry name" value="HTH-type transcriptional activator RhaS"/>
    <property type="match status" value="1"/>
</dbReference>
<dbReference type="Gene3D" id="1.10.10.60">
    <property type="entry name" value="Homeodomain-like"/>
    <property type="match status" value="1"/>
</dbReference>
<dbReference type="Gene3D" id="2.60.120.10">
    <property type="entry name" value="Jelly Rolls"/>
    <property type="match status" value="1"/>
</dbReference>
<dbReference type="HAMAP" id="MF_01534">
    <property type="entry name" value="HTH_type_RhaS"/>
    <property type="match status" value="1"/>
</dbReference>
<dbReference type="InterPro" id="IPR003313">
    <property type="entry name" value="AraC-bd"/>
</dbReference>
<dbReference type="InterPro" id="IPR050204">
    <property type="entry name" value="AraC_XylS_family_regulators"/>
</dbReference>
<dbReference type="InterPro" id="IPR009057">
    <property type="entry name" value="Homeodomain-like_sf"/>
</dbReference>
<dbReference type="InterPro" id="IPR037923">
    <property type="entry name" value="HTH-like"/>
</dbReference>
<dbReference type="InterPro" id="IPR018060">
    <property type="entry name" value="HTH_AraC"/>
</dbReference>
<dbReference type="InterPro" id="IPR018062">
    <property type="entry name" value="HTH_AraC-typ_CS"/>
</dbReference>
<dbReference type="InterPro" id="IPR047220">
    <property type="entry name" value="RhaR_RhaS-like_N"/>
</dbReference>
<dbReference type="InterPro" id="IPR014710">
    <property type="entry name" value="RmlC-like_jellyroll"/>
</dbReference>
<dbReference type="InterPro" id="IPR020449">
    <property type="entry name" value="Tscrpt_reg_AraC-type_HTH"/>
</dbReference>
<dbReference type="InterPro" id="IPR023609">
    <property type="entry name" value="Tscrpt_reg_HTH_RhaS"/>
</dbReference>
<dbReference type="NCBIfam" id="NF010028">
    <property type="entry name" value="PRK13503.1"/>
    <property type="match status" value="1"/>
</dbReference>
<dbReference type="PANTHER" id="PTHR46796:SF13">
    <property type="entry name" value="HTH-TYPE TRANSCRIPTIONAL ACTIVATOR RHAS"/>
    <property type="match status" value="1"/>
</dbReference>
<dbReference type="PANTHER" id="PTHR46796">
    <property type="entry name" value="HTH-TYPE TRANSCRIPTIONAL ACTIVATOR RHAS-RELATED"/>
    <property type="match status" value="1"/>
</dbReference>
<dbReference type="Pfam" id="PF02311">
    <property type="entry name" value="AraC_binding"/>
    <property type="match status" value="1"/>
</dbReference>
<dbReference type="Pfam" id="PF12833">
    <property type="entry name" value="HTH_18"/>
    <property type="match status" value="1"/>
</dbReference>
<dbReference type="PRINTS" id="PR00032">
    <property type="entry name" value="HTHARAC"/>
</dbReference>
<dbReference type="SMART" id="SM00342">
    <property type="entry name" value="HTH_ARAC"/>
    <property type="match status" value="1"/>
</dbReference>
<dbReference type="SUPFAM" id="SSF46689">
    <property type="entry name" value="Homeodomain-like"/>
    <property type="match status" value="2"/>
</dbReference>
<dbReference type="SUPFAM" id="SSF51215">
    <property type="entry name" value="Regulatory protein AraC"/>
    <property type="match status" value="1"/>
</dbReference>
<dbReference type="PROSITE" id="PS00041">
    <property type="entry name" value="HTH_ARAC_FAMILY_1"/>
    <property type="match status" value="1"/>
</dbReference>
<dbReference type="PROSITE" id="PS01124">
    <property type="entry name" value="HTH_ARAC_FAMILY_2"/>
    <property type="match status" value="1"/>
</dbReference>
<gene>
    <name evidence="1" type="primary">rhaS</name>
    <name type="ordered locus">EcSMS35_4297</name>
</gene>
<reference key="1">
    <citation type="journal article" date="2008" name="J. Bacteriol.">
        <title>Insights into the environmental resistance gene pool from the genome sequence of the multidrug-resistant environmental isolate Escherichia coli SMS-3-5.</title>
        <authorList>
            <person name="Fricke W.F."/>
            <person name="Wright M.S."/>
            <person name="Lindell A.H."/>
            <person name="Harkins D.M."/>
            <person name="Baker-Austin C."/>
            <person name="Ravel J."/>
            <person name="Stepanauskas R."/>
        </authorList>
    </citation>
    <scope>NUCLEOTIDE SEQUENCE [LARGE SCALE GENOMIC DNA]</scope>
    <source>
        <strain>SMS-3-5 / SECEC</strain>
    </source>
</reference>
<evidence type="ECO:0000255" key="1">
    <source>
        <dbReference type="HAMAP-Rule" id="MF_01534"/>
    </source>
</evidence>
<protein>
    <recommendedName>
        <fullName evidence="1">HTH-type transcriptional activator RhaS</fullName>
    </recommendedName>
    <alternativeName>
        <fullName evidence="1">L-rhamnose operon regulatory protein RhaS</fullName>
    </alternativeName>
</protein>
<sequence>MTVLHSVDFFPSGNASVAIEPRLPQADFPEHHHDFHEIVIVEHGTGIHVFNGQPYTITGGTVCFVRDHDRHLYEHTDNLCLTNVLYRSPDRFQFLAGLNQLLPQEQDGQYPSHWRVNHSVLQQVRQLVAQMEQQEEENDLPSTASREILFMQLLLLLRKSSLQENLENSASRLNLLLAWLEDHFADEVNWDAVADQFSLSLRTLHRQLKQQTGLTPQRYLNRLRLMKARHLLRHSEASVTDIAYRCGFSDSNHFSTLFRREFNWSPRDIRQGRDGFLQ</sequence>
<name>RHAS_ECOSM</name>